<accession>P31627</accession>
<name>ENV_CAEVG</name>
<comment type="function">
    <text evidence="1">The surface protein (SU) attaches the virus to the host cell by binding to its receptor. This interaction triggers the refolding of the transmembrane protein (TM) and is thought to activate its fusogenic potential by unmasking its fusion peptide. Fusion occurs at the host cell plasma membrane (By similarity).</text>
</comment>
<comment type="function">
    <text evidence="1">The transmembrane protein (TM) acts as a class I viral fusion protein. Under the current model, the protein has at least 3 conformational states: pre-fusion native state, pre-hairpin intermediate state, and post-fusion hairpin state. During viral and target cell membrane fusion, the coiled coil regions (heptad repeats) assume a trimer-of-hairpins structure, positioning the fusion peptide in close proximity to the C-terminal region of the ectodomain. The formation of this structure appears to drive apposition and subsequent fusion of viral and target cell membranes. Membranes fusion leads to delivery of the nucleocapsid into the cytoplasm (By similarity).</text>
</comment>
<comment type="subunit">
    <text evidence="1">The mature envelope protein (Env) consists of a trimer of SU-TM heterodimers attached by noncovalent interactions or by a labile interchain disulfide bond.</text>
</comment>
<comment type="subcellular location">
    <molecule>Transmembrane protein</molecule>
    <subcellularLocation>
        <location evidence="1">Virion membrane</location>
        <topology evidence="1">Single-pass type I membrane protein</topology>
    </subcellularLocation>
    <subcellularLocation>
        <location evidence="1">Host cell membrane</location>
        <topology evidence="1">Single-pass type I membrane protein</topology>
    </subcellularLocation>
    <text evidence="1">It is probably concentrated at the site of budding and incorporated into the virions possibly by contacts between the cytoplasmic tail of Env and the N-terminus of Gag.</text>
</comment>
<comment type="subcellular location">
    <molecule>Surface protein</molecule>
    <subcellularLocation>
        <location evidence="1">Virion membrane</location>
        <topology evidence="1">Peripheral membrane protein</topology>
    </subcellularLocation>
    <subcellularLocation>
        <location evidence="1">Host cell membrane</location>
        <topology evidence="1">Peripheral membrane protein</topology>
    </subcellularLocation>
    <text evidence="1">The surface protein is not anchored to the viral envelope, but associates with the extravirion surface through its binding to TM. It is probably concentrated at the site of budding and incorporated into the virions possibly by contacts between the cytoplasmic tail of Env and the N-terminus of Gag (By similarity).</text>
</comment>
<comment type="PTM">
    <text evidence="1">Specific enzymatic cleavages in vivo yield mature proteins. Envelope glycoproteins are synthesized as an inactive precursor that is N-glycosylated and processed likely by host cell furin or by a furin-like protease in the Golgi to yield the mature SU and TM proteins. The cleavage site between SU and TM requires the minimal sequence [KR]-X-[KR]-R (By similarity).</text>
</comment>
<proteinExistence type="evidence at protein level"/>
<organism>
    <name type="scientific">Caprine arthritis encephalitis virus (strain 63)</name>
    <name type="common">CAEV-63</name>
    <dbReference type="NCBI Taxonomy" id="11662"/>
    <lineage>
        <taxon>Viruses</taxon>
        <taxon>Riboviria</taxon>
        <taxon>Pararnavirae</taxon>
        <taxon>Artverviricota</taxon>
        <taxon>Revtraviricetes</taxon>
        <taxon>Ortervirales</taxon>
        <taxon>Retroviridae</taxon>
        <taxon>Orthoretrovirinae</taxon>
        <taxon>Lentivirus</taxon>
        <taxon>Caprine arthritis encephalitis virus</taxon>
    </lineage>
</organism>
<protein>
    <recommendedName>
        <fullName>Envelope glycoprotein</fullName>
    </recommendedName>
    <alternativeName>
        <fullName>Env polyprotein</fullName>
    </alternativeName>
    <component>
        <recommendedName>
            <fullName>Surface protein</fullName>
        </recommendedName>
        <alternativeName>
            <fullName>Glycoprotein 135</fullName>
            <shortName>gp135</shortName>
        </alternativeName>
    </component>
    <component>
        <recommendedName>
            <fullName>Transmembrane protein</fullName>
        </recommendedName>
        <alternativeName>
            <fullName>Glycoprotein 38</fullName>
            <shortName>gp38</shortName>
        </alternativeName>
    </component>
</protein>
<feature type="signal peptide" evidence="3">
    <location>
        <begin position="1"/>
        <end position="80"/>
    </location>
</feature>
<feature type="chain" id="PRO_0000239523" description="Envelope glycoprotein">
    <location>
        <begin position="81"/>
        <end position="942"/>
    </location>
</feature>
<feature type="chain" id="PRO_0000038691" description="Surface protein" evidence="1">
    <location>
        <begin position="81"/>
        <end position="630"/>
    </location>
</feature>
<feature type="chain" id="PRO_0000038692" description="Transmembrane protein" evidence="1">
    <location>
        <begin position="631"/>
        <end position="942"/>
    </location>
</feature>
<feature type="topological domain" description="Extracellular" evidence="2">
    <location>
        <begin position="81"/>
        <end position="799"/>
    </location>
</feature>
<feature type="transmembrane region" description="Helical" evidence="2">
    <location>
        <begin position="800"/>
        <end position="820"/>
    </location>
</feature>
<feature type="topological domain" description="Cytoplasmic" evidence="2">
    <location>
        <begin position="821"/>
        <end position="942"/>
    </location>
</feature>
<feature type="region of interest" description="Fusion peptide" evidence="2">
    <location>
        <begin position="631"/>
        <end position="651"/>
    </location>
</feature>
<feature type="region of interest" description="Immunosuppression" evidence="1">
    <location>
        <begin position="697"/>
        <end position="713"/>
    </location>
</feature>
<feature type="coiled-coil region" evidence="2">
    <location>
        <begin position="663"/>
        <end position="713"/>
    </location>
</feature>
<feature type="coiled-coil region" evidence="2">
    <location>
        <begin position="754"/>
        <end position="789"/>
    </location>
</feature>
<feature type="site" description="Cleavage; by host" evidence="1">
    <location>
        <begin position="630"/>
        <end position="631"/>
    </location>
</feature>
<feature type="glycosylation site" description="N-linked (GlcNAc...) asparagine; by host" evidence="2">
    <location>
        <position position="51"/>
    </location>
</feature>
<feature type="glycosylation site" description="N-linked (GlcNAc...) asparagine; by host" evidence="2">
    <location>
        <position position="98"/>
    </location>
</feature>
<feature type="glycosylation site" description="N-linked (GlcNAc...) asparagine; by host" evidence="2">
    <location>
        <position position="131"/>
    </location>
</feature>
<feature type="glycosylation site" description="N-linked (GlcNAc...) asparagine; by host" evidence="2">
    <location>
        <position position="176"/>
    </location>
</feature>
<feature type="glycosylation site" description="N-linked (GlcNAc...) asparagine; by host" evidence="2">
    <location>
        <position position="228"/>
    </location>
</feature>
<feature type="glycosylation site" description="N-linked (GlcNAc...) asparagine; by host" evidence="2">
    <location>
        <position position="331"/>
    </location>
</feature>
<feature type="glycosylation site" description="N-linked (GlcNAc...) asparagine; by host" evidence="2">
    <location>
        <position position="348"/>
    </location>
</feature>
<feature type="glycosylation site" description="N-linked (GlcNAc...) asparagine; by host" evidence="2">
    <location>
        <position position="354"/>
    </location>
</feature>
<feature type="glycosylation site" description="N-linked (GlcNAc...) asparagine; by host" evidence="2">
    <location>
        <position position="370"/>
    </location>
</feature>
<feature type="glycosylation site" description="N-linked (GlcNAc...) asparagine; by host" evidence="2">
    <location>
        <position position="379"/>
    </location>
</feature>
<feature type="glycosylation site" description="N-linked (GlcNAc...) asparagine; by host" evidence="2">
    <location>
        <position position="400"/>
    </location>
</feature>
<feature type="glycosylation site" description="N-linked (GlcNAc...) asparagine; by host" evidence="2">
    <location>
        <position position="404"/>
    </location>
</feature>
<feature type="glycosylation site" description="N-linked (GlcNAc...) asparagine; by host" evidence="2">
    <location>
        <position position="435"/>
    </location>
</feature>
<feature type="glycosylation site" description="N-linked (GlcNAc...) asparagine; by host" evidence="2">
    <location>
        <position position="441"/>
    </location>
</feature>
<feature type="glycosylation site" description="N-linked (GlcNAc...) asparagine; by host" evidence="2">
    <location>
        <position position="447"/>
    </location>
</feature>
<feature type="glycosylation site" description="N-linked (GlcNAc...) asparagine; by host" evidence="2">
    <location>
        <position position="457"/>
    </location>
</feature>
<feature type="glycosylation site" description="N-linked (GlcNAc...) asparagine; by host" evidence="2">
    <location>
        <position position="467"/>
    </location>
</feature>
<feature type="glycosylation site" description="N-linked (GlcNAc...) asparagine; by host" evidence="2">
    <location>
        <position position="481"/>
    </location>
</feature>
<feature type="glycosylation site" description="N-linked (GlcNAc...) asparagine; by host" evidence="2">
    <location>
        <position position="493"/>
    </location>
</feature>
<feature type="glycosylation site" description="N-linked (GlcNAc...) asparagine; by host" evidence="2">
    <location>
        <position position="503"/>
    </location>
</feature>
<feature type="glycosylation site" description="N-linked (GlcNAc...) asparagine; by host" evidence="2">
    <location>
        <position position="509"/>
    </location>
</feature>
<feature type="glycosylation site" description="N-linked (GlcNAc...) asparagine; by host" evidence="2">
    <location>
        <position position="527"/>
    </location>
</feature>
<feature type="glycosylation site" description="N-linked (GlcNAc...) asparagine; by host" evidence="2">
    <location>
        <position position="534"/>
    </location>
</feature>
<organismHost>
    <name type="scientific">Capra hircus</name>
    <name type="common">Goat</name>
    <dbReference type="NCBI Taxonomy" id="9925"/>
</organismHost>
<sequence length="942" mass="108437">MDAGASYMRLTGEENWVEVTMDEEKERKGKDVQQGKYRPQVSKPIINRDTNTSFAYKGIFLWGIQITMWILLWTNMCVRAEDYITLISDPYGFSPIKNVSGVPVTCVTKEFARWGCQPLGAYPDPEIEYRNVSQEIVKEVYQENWPWNTYHWPLWQMENVRYWLKENIAENKKRKNSTKKGIEELLAGTIRGRFCVPYPFALLKCTKWCWYPAEIDQETGRARKIKINCTEARAVSCTEEMPLASIHRAYWDEKDRESMAFMNIRACDSNLRCQKRPGGCVEGYPIPVGANIIPENMKYLRGQKSQYGGIKDKNGELKLPLTVRVWVKLANVSTWVNGTPPYWQNRINGSKGINGTLWGQLSGMHHLGFNLSQTGKWCNYTGKIKIGQETFSYHYKPNWNCTGNWTQHPVWQVMRDLDMVEHMTGECVQRPQRHNITVDRNQTITGNCSVTNWDGCNCSRSGNYLYNSTTGGLLVIICRNNNTITGIMGTNTNWTTMWRIYRNCSGCENATLDRKETGTLGGVANKNCSLPHKNESNKWTCAPRQREGKTDSLYIAGGKKFWTREKAQYSCENNIGELDGMLHQQILLQKYQVIKVRAYTYGVIEMPENYAKTRIINRRKRELSHTRKKRGVGLVIMLVIMAIVAAAGASLGVANAIQQSYTKAAVQTLANATAAQQDALEATYAMVQHVAKGVRILEARVARVEAITDRIMLYQELDCWHYHQYCVTSTRADVAKYINWTRFKDNCTWQQWERELQGYDGNLTMLLRESARQTQLAEEQVRRIPDVWESLKEVFDWSGWFSWLKYIPIIVVGLVGCILIRAVICVCQPLVQIYRTLSTPTYQRVTVIMEKRADVAGENQDFGDGLEESDDSKTDQKVTVQKAWSRAWELWQNSPWKEPWKRSLLKLLILPLTMGIWINGRLGEHLKNKKERVDCETWGKGD</sequence>
<dbReference type="EMBL" id="M60855">
    <property type="protein sequence ID" value="AAB88709.2"/>
    <property type="molecule type" value="mRNA"/>
</dbReference>
<dbReference type="PIR" id="A41307">
    <property type="entry name" value="VCLJC6"/>
</dbReference>
<dbReference type="GlyCosmos" id="P31627">
    <property type="glycosylation" value="23 sites, No reported glycans"/>
</dbReference>
<dbReference type="GO" id="GO:0020002">
    <property type="term" value="C:host cell plasma membrane"/>
    <property type="evidence" value="ECO:0007669"/>
    <property type="project" value="UniProtKB-SubCell"/>
</dbReference>
<dbReference type="GO" id="GO:0016020">
    <property type="term" value="C:membrane"/>
    <property type="evidence" value="ECO:0007669"/>
    <property type="project" value="UniProtKB-KW"/>
</dbReference>
<dbReference type="GO" id="GO:0019031">
    <property type="term" value="C:viral envelope"/>
    <property type="evidence" value="ECO:0007669"/>
    <property type="project" value="UniProtKB-KW"/>
</dbReference>
<dbReference type="GO" id="GO:0055036">
    <property type="term" value="C:virion membrane"/>
    <property type="evidence" value="ECO:0007669"/>
    <property type="project" value="UniProtKB-SubCell"/>
</dbReference>
<dbReference type="GO" id="GO:0046718">
    <property type="term" value="P:symbiont entry into host cell"/>
    <property type="evidence" value="ECO:0007669"/>
    <property type="project" value="UniProtKB-KW"/>
</dbReference>
<dbReference type="GO" id="GO:0019062">
    <property type="term" value="P:virion attachment to host cell"/>
    <property type="evidence" value="ECO:0007669"/>
    <property type="project" value="UniProtKB-KW"/>
</dbReference>
<dbReference type="Gene3D" id="1.20.5.440">
    <property type="entry name" value="ATP synthase delta/epsilon subunit, C-terminal domain"/>
    <property type="match status" value="1"/>
</dbReference>
<dbReference type="SUPFAM" id="SSF58069">
    <property type="entry name" value="Virus ectodomain"/>
    <property type="match status" value="1"/>
</dbReference>
<evidence type="ECO:0000250" key="1"/>
<evidence type="ECO:0000255" key="2"/>
<evidence type="ECO:0000269" key="3">
    <source>
    </source>
</evidence>
<keyword id="KW-0165">Cleavage on pair of basic residues</keyword>
<keyword id="KW-0175">Coiled coil</keyword>
<keyword id="KW-0903">Direct protein sequencing</keyword>
<keyword id="KW-1015">Disulfide bond</keyword>
<keyword id="KW-0325">Glycoprotein</keyword>
<keyword id="KW-1032">Host cell membrane</keyword>
<keyword id="KW-1043">Host membrane</keyword>
<keyword id="KW-0945">Host-virus interaction</keyword>
<keyword id="KW-0472">Membrane</keyword>
<keyword id="KW-0732">Signal</keyword>
<keyword id="KW-0812">Transmembrane</keyword>
<keyword id="KW-1133">Transmembrane helix</keyword>
<keyword id="KW-1161">Viral attachment to host cell</keyword>
<keyword id="KW-0261">Viral envelope protein</keyword>
<keyword id="KW-0946">Virion</keyword>
<keyword id="KW-1160">Virus entry into host cell</keyword>
<gene>
    <name type="primary">env</name>
</gene>
<reference key="1">
    <citation type="journal article" date="1991" name="J. Virol.">
        <title>Structure and genetic variability of envelope glycoproteins of two antigenic variants of caprine arthritis-encephalitis lentivirus.</title>
        <authorList>
            <person name="Knowles D.P. Jr."/>
            <person name="Cheevers W.P."/>
            <person name="McGuire T.C."/>
            <person name="Brassfield A.L."/>
            <person name="Harwood W.G."/>
            <person name="Stem T.A."/>
        </authorList>
    </citation>
    <scope>NUCLEOTIDE SEQUENCE [MRNA]</scope>
    <scope>PROTEIN SEQUENCE OF 81-95</scope>
</reference>
<reference key="2">
    <citation type="submission" date="2000-04" db="EMBL/GenBank/DDBJ databases">
        <authorList>
            <person name="Knowles D.P."/>
        </authorList>
    </citation>
    <scope>SEQUENCE REVISION</scope>
</reference>